<reference key="1">
    <citation type="submission" date="2008-04" db="EMBL/GenBank/DDBJ databases">
        <title>Complete sequence of chromosome of Exiguobacterium sibiricum 255-15.</title>
        <authorList>
            <consortium name="US DOE Joint Genome Institute"/>
            <person name="Copeland A."/>
            <person name="Lucas S."/>
            <person name="Lapidus A."/>
            <person name="Glavina del Rio T."/>
            <person name="Dalin E."/>
            <person name="Tice H."/>
            <person name="Bruce D."/>
            <person name="Goodwin L."/>
            <person name="Pitluck S."/>
            <person name="Kiss H."/>
            <person name="Chertkov O."/>
            <person name="Monk C."/>
            <person name="Brettin T."/>
            <person name="Detter J.C."/>
            <person name="Han C."/>
            <person name="Kuske C.R."/>
            <person name="Schmutz J."/>
            <person name="Larimer F."/>
            <person name="Land M."/>
            <person name="Hauser L."/>
            <person name="Kyrpides N."/>
            <person name="Mikhailova N."/>
            <person name="Vishnivetskaya T."/>
            <person name="Rodrigues D.F."/>
            <person name="Gilichinsky D."/>
            <person name="Tiedje J."/>
            <person name="Richardson P."/>
        </authorList>
    </citation>
    <scope>NUCLEOTIDE SEQUENCE [LARGE SCALE GENOMIC DNA]</scope>
    <source>
        <strain>DSM 17290 / CCUG 55495 / CIP 109462 / JCM 13490 / 255-15</strain>
    </source>
</reference>
<feature type="chain" id="PRO_1000124035" description="4-hydroxy-tetrahydrodipicolinate synthase">
    <location>
        <begin position="1"/>
        <end position="293"/>
    </location>
</feature>
<feature type="active site" description="Proton donor/acceptor" evidence="1">
    <location>
        <position position="133"/>
    </location>
</feature>
<feature type="active site" description="Schiff-base intermediate with substrate" evidence="1">
    <location>
        <position position="161"/>
    </location>
</feature>
<feature type="binding site" evidence="1">
    <location>
        <position position="45"/>
    </location>
    <ligand>
        <name>pyruvate</name>
        <dbReference type="ChEBI" id="CHEBI:15361"/>
    </ligand>
</feature>
<feature type="binding site" evidence="1">
    <location>
        <position position="203"/>
    </location>
    <ligand>
        <name>pyruvate</name>
        <dbReference type="ChEBI" id="CHEBI:15361"/>
    </ligand>
</feature>
<feature type="site" description="Part of a proton relay during catalysis" evidence="1">
    <location>
        <position position="44"/>
    </location>
</feature>
<feature type="site" description="Part of a proton relay during catalysis" evidence="1">
    <location>
        <position position="107"/>
    </location>
</feature>
<accession>B1YJ39</accession>
<dbReference type="EC" id="4.3.3.7" evidence="1"/>
<dbReference type="EMBL" id="CP001022">
    <property type="protein sequence ID" value="ACB59969.1"/>
    <property type="molecule type" value="Genomic_DNA"/>
</dbReference>
<dbReference type="RefSeq" id="WP_012369393.1">
    <property type="nucleotide sequence ID" value="NC_010556.1"/>
</dbReference>
<dbReference type="SMR" id="B1YJ39"/>
<dbReference type="STRING" id="262543.Exig_0487"/>
<dbReference type="KEGG" id="esi:Exig_0487"/>
<dbReference type="eggNOG" id="COG0329">
    <property type="taxonomic scope" value="Bacteria"/>
</dbReference>
<dbReference type="HOGENOM" id="CLU_049343_7_1_9"/>
<dbReference type="OrthoDB" id="9782828at2"/>
<dbReference type="UniPathway" id="UPA00034">
    <property type="reaction ID" value="UER00017"/>
</dbReference>
<dbReference type="Proteomes" id="UP000001681">
    <property type="component" value="Chromosome"/>
</dbReference>
<dbReference type="GO" id="GO:0005829">
    <property type="term" value="C:cytosol"/>
    <property type="evidence" value="ECO:0007669"/>
    <property type="project" value="TreeGrafter"/>
</dbReference>
<dbReference type="GO" id="GO:0008840">
    <property type="term" value="F:4-hydroxy-tetrahydrodipicolinate synthase activity"/>
    <property type="evidence" value="ECO:0007669"/>
    <property type="project" value="UniProtKB-UniRule"/>
</dbReference>
<dbReference type="GO" id="GO:0019877">
    <property type="term" value="P:diaminopimelate biosynthetic process"/>
    <property type="evidence" value="ECO:0007669"/>
    <property type="project" value="UniProtKB-UniRule"/>
</dbReference>
<dbReference type="GO" id="GO:0009089">
    <property type="term" value="P:lysine biosynthetic process via diaminopimelate"/>
    <property type="evidence" value="ECO:0007669"/>
    <property type="project" value="UniProtKB-UniRule"/>
</dbReference>
<dbReference type="CDD" id="cd00950">
    <property type="entry name" value="DHDPS"/>
    <property type="match status" value="1"/>
</dbReference>
<dbReference type="Gene3D" id="3.20.20.70">
    <property type="entry name" value="Aldolase class I"/>
    <property type="match status" value="1"/>
</dbReference>
<dbReference type="HAMAP" id="MF_00418">
    <property type="entry name" value="DapA"/>
    <property type="match status" value="1"/>
</dbReference>
<dbReference type="InterPro" id="IPR013785">
    <property type="entry name" value="Aldolase_TIM"/>
</dbReference>
<dbReference type="InterPro" id="IPR005263">
    <property type="entry name" value="DapA"/>
</dbReference>
<dbReference type="InterPro" id="IPR002220">
    <property type="entry name" value="DapA-like"/>
</dbReference>
<dbReference type="InterPro" id="IPR020625">
    <property type="entry name" value="Schiff_base-form_aldolases_AS"/>
</dbReference>
<dbReference type="InterPro" id="IPR020624">
    <property type="entry name" value="Schiff_base-form_aldolases_CS"/>
</dbReference>
<dbReference type="NCBIfam" id="TIGR00674">
    <property type="entry name" value="dapA"/>
    <property type="match status" value="1"/>
</dbReference>
<dbReference type="PANTHER" id="PTHR12128:SF66">
    <property type="entry name" value="4-HYDROXY-2-OXOGLUTARATE ALDOLASE, MITOCHONDRIAL"/>
    <property type="match status" value="1"/>
</dbReference>
<dbReference type="PANTHER" id="PTHR12128">
    <property type="entry name" value="DIHYDRODIPICOLINATE SYNTHASE"/>
    <property type="match status" value="1"/>
</dbReference>
<dbReference type="Pfam" id="PF00701">
    <property type="entry name" value="DHDPS"/>
    <property type="match status" value="1"/>
</dbReference>
<dbReference type="PIRSF" id="PIRSF001365">
    <property type="entry name" value="DHDPS"/>
    <property type="match status" value="1"/>
</dbReference>
<dbReference type="PRINTS" id="PR00146">
    <property type="entry name" value="DHPICSNTHASE"/>
</dbReference>
<dbReference type="SMART" id="SM01130">
    <property type="entry name" value="DHDPS"/>
    <property type="match status" value="1"/>
</dbReference>
<dbReference type="SUPFAM" id="SSF51569">
    <property type="entry name" value="Aldolase"/>
    <property type="match status" value="1"/>
</dbReference>
<dbReference type="PROSITE" id="PS00665">
    <property type="entry name" value="DHDPS_1"/>
    <property type="match status" value="1"/>
</dbReference>
<dbReference type="PROSITE" id="PS00666">
    <property type="entry name" value="DHDPS_2"/>
    <property type="match status" value="1"/>
</dbReference>
<name>DAPA_EXIS2</name>
<gene>
    <name evidence="1" type="primary">dapA</name>
    <name type="ordered locus">Exig_0487</name>
</gene>
<comment type="function">
    <text evidence="1">Catalyzes the condensation of (S)-aspartate-beta-semialdehyde [(S)-ASA] and pyruvate to 4-hydroxy-tetrahydrodipicolinate (HTPA).</text>
</comment>
<comment type="catalytic activity">
    <reaction evidence="1">
        <text>L-aspartate 4-semialdehyde + pyruvate = (2S,4S)-4-hydroxy-2,3,4,5-tetrahydrodipicolinate + H2O + H(+)</text>
        <dbReference type="Rhea" id="RHEA:34171"/>
        <dbReference type="ChEBI" id="CHEBI:15361"/>
        <dbReference type="ChEBI" id="CHEBI:15377"/>
        <dbReference type="ChEBI" id="CHEBI:15378"/>
        <dbReference type="ChEBI" id="CHEBI:67139"/>
        <dbReference type="ChEBI" id="CHEBI:537519"/>
        <dbReference type="EC" id="4.3.3.7"/>
    </reaction>
</comment>
<comment type="pathway">
    <text evidence="1">Amino-acid biosynthesis; L-lysine biosynthesis via DAP pathway; (S)-tetrahydrodipicolinate from L-aspartate: step 3/4.</text>
</comment>
<comment type="subunit">
    <text evidence="1">Homotetramer; dimer of dimers.</text>
</comment>
<comment type="subcellular location">
    <subcellularLocation>
        <location evidence="1">Cytoplasm</location>
    </subcellularLocation>
</comment>
<comment type="similarity">
    <text evidence="1">Belongs to the DapA family.</text>
</comment>
<comment type="caution">
    <text evidence="2">Was originally thought to be a dihydrodipicolinate synthase (DHDPS), catalyzing the condensation of (S)-aspartate-beta-semialdehyde [(S)-ASA] and pyruvate to dihydrodipicolinate (DHDP). However, it was shown in E.coli that the product of the enzymatic reaction is not dihydrodipicolinate but in fact (4S)-4-hydroxy-2,3,4,5-tetrahydro-(2S)-dipicolinic acid (HTPA), and that the consecutive dehydration reaction leading to DHDP is not spontaneous but catalyzed by DapB.</text>
</comment>
<evidence type="ECO:0000255" key="1">
    <source>
        <dbReference type="HAMAP-Rule" id="MF_00418"/>
    </source>
</evidence>
<evidence type="ECO:0000305" key="2"/>
<proteinExistence type="inferred from homology"/>
<protein>
    <recommendedName>
        <fullName evidence="1">4-hydroxy-tetrahydrodipicolinate synthase</fullName>
        <shortName evidence="1">HTPA synthase</shortName>
        <ecNumber evidence="1">4.3.3.7</ecNumber>
    </recommendedName>
</protein>
<keyword id="KW-0028">Amino-acid biosynthesis</keyword>
<keyword id="KW-0963">Cytoplasm</keyword>
<keyword id="KW-0220">Diaminopimelate biosynthesis</keyword>
<keyword id="KW-0456">Lyase</keyword>
<keyword id="KW-0457">Lysine biosynthesis</keyword>
<keyword id="KW-1185">Reference proteome</keyword>
<keyword id="KW-0704">Schiff base</keyword>
<organism>
    <name type="scientific">Exiguobacterium sibiricum (strain DSM 17290 / CCUG 55495 / CIP 109462 / JCM 13490 / 255-15)</name>
    <dbReference type="NCBI Taxonomy" id="262543"/>
    <lineage>
        <taxon>Bacteria</taxon>
        <taxon>Bacillati</taxon>
        <taxon>Bacillota</taxon>
        <taxon>Bacilli</taxon>
        <taxon>Bacillales</taxon>
        <taxon>Bacillales Family XII. Incertae Sedis</taxon>
        <taxon>Exiguobacterium</taxon>
    </lineage>
</organism>
<sequence>MFKGAGTALATPFTSTGELDLAVFEQLIEQQLAANIQALVVGGTTGEGSTLTNEEFETLLETAIRVTAGRVPVIAGTGTNNTAQTIEKTQTAARLGADAAMLVTPYYNKTSQAGLVAHFTAVADAVDLPIMLYNVPSRTGVAISVETAVTLAKHPNIQAFKEASGDVSFMGELMTALPDGFAVFCGNDDQILPYMAWGAQGVISVLSNPYPAETQALAEALLANDYTTARRIQSDLMPVISALFSDVNPIPVKAALEEIGLAVGAPRLPLVRQSEAGHAHLLETMRSYKGVVG</sequence>